<reference key="1">
    <citation type="journal article" date="2008" name="PLoS ONE">
        <title>A recalibrated molecular clock and independent origins for the cholera pandemic clones.</title>
        <authorList>
            <person name="Feng L."/>
            <person name="Reeves P.R."/>
            <person name="Lan R."/>
            <person name="Ren Y."/>
            <person name="Gao C."/>
            <person name="Zhou Z."/>
            <person name="Ren Y."/>
            <person name="Cheng J."/>
            <person name="Wang W."/>
            <person name="Wang J."/>
            <person name="Qian W."/>
            <person name="Li D."/>
            <person name="Wang L."/>
        </authorList>
    </citation>
    <scope>NUCLEOTIDE SEQUENCE [LARGE SCALE GENOMIC DNA]</scope>
    <source>
        <strain>M66-2</strain>
    </source>
</reference>
<dbReference type="EC" id="3.4.24.-" evidence="1"/>
<dbReference type="EMBL" id="CP001233">
    <property type="protein sequence ID" value="ACP05390.1"/>
    <property type="molecule type" value="Genomic_DNA"/>
</dbReference>
<dbReference type="RefSeq" id="WP_000821682.1">
    <property type="nucleotide sequence ID" value="NC_012578.1"/>
</dbReference>
<dbReference type="SMR" id="C3LU14"/>
<dbReference type="MEROPS" id="M48.002"/>
<dbReference type="GeneID" id="69720192"/>
<dbReference type="KEGG" id="vcm:VCM66_1073"/>
<dbReference type="HOGENOM" id="CLU_042266_1_0_6"/>
<dbReference type="Proteomes" id="UP000001217">
    <property type="component" value="Chromosome I"/>
</dbReference>
<dbReference type="GO" id="GO:0005886">
    <property type="term" value="C:plasma membrane"/>
    <property type="evidence" value="ECO:0007669"/>
    <property type="project" value="UniProtKB-SubCell"/>
</dbReference>
<dbReference type="GO" id="GO:0004222">
    <property type="term" value="F:metalloendopeptidase activity"/>
    <property type="evidence" value="ECO:0007669"/>
    <property type="project" value="UniProtKB-UniRule"/>
</dbReference>
<dbReference type="GO" id="GO:0008270">
    <property type="term" value="F:zinc ion binding"/>
    <property type="evidence" value="ECO:0007669"/>
    <property type="project" value="UniProtKB-UniRule"/>
</dbReference>
<dbReference type="GO" id="GO:0006508">
    <property type="term" value="P:proteolysis"/>
    <property type="evidence" value="ECO:0007669"/>
    <property type="project" value="UniProtKB-KW"/>
</dbReference>
<dbReference type="CDD" id="cd07335">
    <property type="entry name" value="M48B_HtpX_like"/>
    <property type="match status" value="1"/>
</dbReference>
<dbReference type="FunFam" id="3.30.2010.10:FF:000001">
    <property type="entry name" value="Protease HtpX"/>
    <property type="match status" value="1"/>
</dbReference>
<dbReference type="Gene3D" id="3.30.2010.10">
    <property type="entry name" value="Metalloproteases ('zincins'), catalytic domain"/>
    <property type="match status" value="1"/>
</dbReference>
<dbReference type="HAMAP" id="MF_00188">
    <property type="entry name" value="Pept_M48_protease_HtpX"/>
    <property type="match status" value="1"/>
</dbReference>
<dbReference type="InterPro" id="IPR050083">
    <property type="entry name" value="HtpX_protease"/>
</dbReference>
<dbReference type="InterPro" id="IPR022919">
    <property type="entry name" value="Pept_M48_protease_HtpX"/>
</dbReference>
<dbReference type="InterPro" id="IPR001915">
    <property type="entry name" value="Peptidase_M48"/>
</dbReference>
<dbReference type="NCBIfam" id="NF003965">
    <property type="entry name" value="PRK05457.1"/>
    <property type="match status" value="1"/>
</dbReference>
<dbReference type="PANTHER" id="PTHR43221">
    <property type="entry name" value="PROTEASE HTPX"/>
    <property type="match status" value="1"/>
</dbReference>
<dbReference type="PANTHER" id="PTHR43221:SF1">
    <property type="entry name" value="PROTEASE HTPX"/>
    <property type="match status" value="1"/>
</dbReference>
<dbReference type="Pfam" id="PF01435">
    <property type="entry name" value="Peptidase_M48"/>
    <property type="match status" value="1"/>
</dbReference>
<proteinExistence type="inferred from homology"/>
<gene>
    <name evidence="1" type="primary">htpX</name>
    <name type="ordered locus">VCM66_1073</name>
</gene>
<evidence type="ECO:0000255" key="1">
    <source>
        <dbReference type="HAMAP-Rule" id="MF_00188"/>
    </source>
</evidence>
<comment type="cofactor">
    <cofactor evidence="1">
        <name>Zn(2+)</name>
        <dbReference type="ChEBI" id="CHEBI:29105"/>
    </cofactor>
    <text evidence="1">Binds 1 zinc ion per subunit.</text>
</comment>
<comment type="subcellular location">
    <subcellularLocation>
        <location evidence="1">Cell inner membrane</location>
        <topology evidence="1">Multi-pass membrane protein</topology>
    </subcellularLocation>
</comment>
<comment type="similarity">
    <text evidence="1">Belongs to the peptidase M48B family.</text>
</comment>
<feature type="chain" id="PRO_1000192754" description="Protease HtpX">
    <location>
        <begin position="1"/>
        <end position="287"/>
    </location>
</feature>
<feature type="transmembrane region" description="Helical" evidence="1">
    <location>
        <begin position="4"/>
        <end position="24"/>
    </location>
</feature>
<feature type="transmembrane region" description="Helical" evidence="1">
    <location>
        <begin position="36"/>
        <end position="56"/>
    </location>
</feature>
<feature type="transmembrane region" description="Helical" evidence="1">
    <location>
        <begin position="158"/>
        <end position="178"/>
    </location>
</feature>
<feature type="transmembrane region" description="Helical" evidence="1">
    <location>
        <begin position="192"/>
        <end position="212"/>
    </location>
</feature>
<feature type="active site" evidence="1">
    <location>
        <position position="144"/>
    </location>
</feature>
<feature type="binding site" evidence="1">
    <location>
        <position position="143"/>
    </location>
    <ligand>
        <name>Zn(2+)</name>
        <dbReference type="ChEBI" id="CHEBI:29105"/>
        <note>catalytic</note>
    </ligand>
</feature>
<feature type="binding site" evidence="1">
    <location>
        <position position="147"/>
    </location>
    <ligand>
        <name>Zn(2+)</name>
        <dbReference type="ChEBI" id="CHEBI:29105"/>
        <note>catalytic</note>
    </ligand>
</feature>
<feature type="binding site" evidence="1">
    <location>
        <position position="221"/>
    </location>
    <ligand>
        <name>Zn(2+)</name>
        <dbReference type="ChEBI" id="CHEBI:29105"/>
        <note>catalytic</note>
    </ligand>
</feature>
<organism>
    <name type="scientific">Vibrio cholerae serotype O1 (strain M66-2)</name>
    <dbReference type="NCBI Taxonomy" id="579112"/>
    <lineage>
        <taxon>Bacteria</taxon>
        <taxon>Pseudomonadati</taxon>
        <taxon>Pseudomonadota</taxon>
        <taxon>Gammaproteobacteria</taxon>
        <taxon>Vibrionales</taxon>
        <taxon>Vibrionaceae</taxon>
        <taxon>Vibrio</taxon>
    </lineage>
</organism>
<keyword id="KW-0997">Cell inner membrane</keyword>
<keyword id="KW-1003">Cell membrane</keyword>
<keyword id="KW-0378">Hydrolase</keyword>
<keyword id="KW-0472">Membrane</keyword>
<keyword id="KW-0479">Metal-binding</keyword>
<keyword id="KW-0482">Metalloprotease</keyword>
<keyword id="KW-0645">Protease</keyword>
<keyword id="KW-0346">Stress response</keyword>
<keyword id="KW-0812">Transmembrane</keyword>
<keyword id="KW-1133">Transmembrane helix</keyword>
<keyword id="KW-0862">Zinc</keyword>
<name>HTPX_VIBCM</name>
<accession>C3LU14</accession>
<protein>
    <recommendedName>
        <fullName evidence="1">Protease HtpX</fullName>
        <ecNumber evidence="1">3.4.24.-</ecNumber>
    </recommendedName>
    <alternativeName>
        <fullName evidence="1">Heat shock protein HtpX</fullName>
    </alternativeName>
</protein>
<sequence>MKRILLFLATNLAVVLVLSVVLNIVYAVTGMQPGSLSGLLVMAAVFGFGGAFISLLMSKSMALRSVGGVVIDTPRNEMEHWLLETVRRQANQAGIGMPTVAIYDAPDMNAFATGAKRDDSLVAVSTGLLHNMTRDEAEAVLAHEVSHIANGDMVTMTLMQGVVNTFVIFLSRFIANIVASRDSEEGEGSNMMVYFGVSMVLELVFGFLASFITMWYSRHREFHADAGAAQLVGKHKMIAALERLKMGQESHLEGSMMAFGITGKRSLSELMMTHPPLEKRIAALRNM</sequence>